<evidence type="ECO:0000255" key="1">
    <source>
        <dbReference type="HAMAP-Rule" id="MF_00382"/>
    </source>
</evidence>
<evidence type="ECO:0000305" key="2"/>
<accession>Q1RB79</accession>
<feature type="chain" id="PRO_1000048973" description="Large ribosomal subunit protein bL20">
    <location>
        <begin position="1"/>
        <end position="118"/>
    </location>
</feature>
<organism>
    <name type="scientific">Escherichia coli (strain UTI89 / UPEC)</name>
    <dbReference type="NCBI Taxonomy" id="364106"/>
    <lineage>
        <taxon>Bacteria</taxon>
        <taxon>Pseudomonadati</taxon>
        <taxon>Pseudomonadota</taxon>
        <taxon>Gammaproteobacteria</taxon>
        <taxon>Enterobacterales</taxon>
        <taxon>Enterobacteriaceae</taxon>
        <taxon>Escherichia</taxon>
    </lineage>
</organism>
<protein>
    <recommendedName>
        <fullName evidence="1">Large ribosomal subunit protein bL20</fullName>
    </recommendedName>
    <alternativeName>
        <fullName evidence="2">50S ribosomal protein L20</fullName>
    </alternativeName>
</protein>
<sequence>MARVKRGVIARARHKKILKQAKGYYGARSRVYRVAFQAVIKAGQYAYRDRRQRKRQFRQLWIARINAAARQNGISYSKFINGLKKASVEIDRKILADIAVFDKVAFTALVEKAKAALA</sequence>
<proteinExistence type="inferred from homology"/>
<keyword id="KW-0687">Ribonucleoprotein</keyword>
<keyword id="KW-0689">Ribosomal protein</keyword>
<keyword id="KW-0694">RNA-binding</keyword>
<keyword id="KW-0699">rRNA-binding</keyword>
<name>RL20_ECOUT</name>
<comment type="function">
    <text evidence="1">Binds directly to 23S ribosomal RNA and is necessary for the in vitro assembly process of the 50S ribosomal subunit. It is not involved in the protein synthesizing functions of that subunit.</text>
</comment>
<comment type="similarity">
    <text evidence="1">Belongs to the bacterial ribosomal protein bL20 family.</text>
</comment>
<reference key="1">
    <citation type="journal article" date="2006" name="Proc. Natl. Acad. Sci. U.S.A.">
        <title>Identification of genes subject to positive selection in uropathogenic strains of Escherichia coli: a comparative genomics approach.</title>
        <authorList>
            <person name="Chen S.L."/>
            <person name="Hung C.-S."/>
            <person name="Xu J."/>
            <person name="Reigstad C.S."/>
            <person name="Magrini V."/>
            <person name="Sabo A."/>
            <person name="Blasiar D."/>
            <person name="Bieri T."/>
            <person name="Meyer R.R."/>
            <person name="Ozersky P."/>
            <person name="Armstrong J.R."/>
            <person name="Fulton R.S."/>
            <person name="Latreille J.P."/>
            <person name="Spieth J."/>
            <person name="Hooton T.M."/>
            <person name="Mardis E.R."/>
            <person name="Hultgren S.J."/>
            <person name="Gordon J.I."/>
        </authorList>
    </citation>
    <scope>NUCLEOTIDE SEQUENCE [LARGE SCALE GENOMIC DNA]</scope>
    <source>
        <strain>UTI89 / UPEC</strain>
    </source>
</reference>
<dbReference type="EMBL" id="CP000243">
    <property type="protein sequence ID" value="ABE07385.1"/>
    <property type="molecule type" value="Genomic_DNA"/>
</dbReference>
<dbReference type="RefSeq" id="WP_000124850.1">
    <property type="nucleotide sequence ID" value="NZ_CP064825.1"/>
</dbReference>
<dbReference type="SMR" id="Q1RB79"/>
<dbReference type="GeneID" id="98388757"/>
<dbReference type="KEGG" id="eci:UTI89_C1909"/>
<dbReference type="HOGENOM" id="CLU_123265_0_1_6"/>
<dbReference type="Proteomes" id="UP000001952">
    <property type="component" value="Chromosome"/>
</dbReference>
<dbReference type="GO" id="GO:1990904">
    <property type="term" value="C:ribonucleoprotein complex"/>
    <property type="evidence" value="ECO:0007669"/>
    <property type="project" value="UniProtKB-KW"/>
</dbReference>
<dbReference type="GO" id="GO:0005840">
    <property type="term" value="C:ribosome"/>
    <property type="evidence" value="ECO:0007669"/>
    <property type="project" value="UniProtKB-KW"/>
</dbReference>
<dbReference type="GO" id="GO:0019843">
    <property type="term" value="F:rRNA binding"/>
    <property type="evidence" value="ECO:0007669"/>
    <property type="project" value="UniProtKB-UniRule"/>
</dbReference>
<dbReference type="GO" id="GO:0003735">
    <property type="term" value="F:structural constituent of ribosome"/>
    <property type="evidence" value="ECO:0007669"/>
    <property type="project" value="InterPro"/>
</dbReference>
<dbReference type="GO" id="GO:0000027">
    <property type="term" value="P:ribosomal large subunit assembly"/>
    <property type="evidence" value="ECO:0007669"/>
    <property type="project" value="UniProtKB-UniRule"/>
</dbReference>
<dbReference type="GO" id="GO:0006412">
    <property type="term" value="P:translation"/>
    <property type="evidence" value="ECO:0007669"/>
    <property type="project" value="InterPro"/>
</dbReference>
<dbReference type="CDD" id="cd07026">
    <property type="entry name" value="Ribosomal_L20"/>
    <property type="match status" value="1"/>
</dbReference>
<dbReference type="FunFam" id="1.10.1900.20:FF:000001">
    <property type="entry name" value="50S ribosomal protein L20"/>
    <property type="match status" value="1"/>
</dbReference>
<dbReference type="Gene3D" id="6.10.160.10">
    <property type="match status" value="1"/>
</dbReference>
<dbReference type="Gene3D" id="1.10.1900.20">
    <property type="entry name" value="Ribosomal protein L20"/>
    <property type="match status" value="1"/>
</dbReference>
<dbReference type="HAMAP" id="MF_00382">
    <property type="entry name" value="Ribosomal_bL20"/>
    <property type="match status" value="1"/>
</dbReference>
<dbReference type="InterPro" id="IPR005813">
    <property type="entry name" value="Ribosomal_bL20"/>
</dbReference>
<dbReference type="InterPro" id="IPR049946">
    <property type="entry name" value="RIBOSOMAL_L20_CS"/>
</dbReference>
<dbReference type="InterPro" id="IPR035566">
    <property type="entry name" value="Ribosomal_protein_bL20_C"/>
</dbReference>
<dbReference type="NCBIfam" id="TIGR01032">
    <property type="entry name" value="rplT_bact"/>
    <property type="match status" value="1"/>
</dbReference>
<dbReference type="PANTHER" id="PTHR10986">
    <property type="entry name" value="39S RIBOSOMAL PROTEIN L20"/>
    <property type="match status" value="1"/>
</dbReference>
<dbReference type="Pfam" id="PF00453">
    <property type="entry name" value="Ribosomal_L20"/>
    <property type="match status" value="1"/>
</dbReference>
<dbReference type="PRINTS" id="PR00062">
    <property type="entry name" value="RIBOSOMALL20"/>
</dbReference>
<dbReference type="SUPFAM" id="SSF74731">
    <property type="entry name" value="Ribosomal protein L20"/>
    <property type="match status" value="1"/>
</dbReference>
<dbReference type="PROSITE" id="PS00937">
    <property type="entry name" value="RIBOSOMAL_L20"/>
    <property type="match status" value="1"/>
</dbReference>
<gene>
    <name evidence="1" type="primary">rplT</name>
    <name type="ordered locus">UTI89_C1909</name>
</gene>